<geneLocation type="chloroplast"/>
<keyword id="KW-0150">Chloroplast</keyword>
<keyword id="KW-0249">Electron transport</keyword>
<keyword id="KW-0349">Heme</keyword>
<keyword id="KW-0408">Iron</keyword>
<keyword id="KW-0472">Membrane</keyword>
<keyword id="KW-0479">Metal-binding</keyword>
<keyword id="KW-0602">Photosynthesis</keyword>
<keyword id="KW-0604">Photosystem II</keyword>
<keyword id="KW-0934">Plastid</keyword>
<keyword id="KW-0793">Thylakoid</keyword>
<keyword id="KW-0812">Transmembrane</keyword>
<keyword id="KW-1133">Transmembrane helix</keyword>
<keyword id="KW-0813">Transport</keyword>
<comment type="function">
    <text evidence="1">This b-type cytochrome is tightly associated with the reaction center of photosystem II (PSII). PSII is a light-driven water:plastoquinone oxidoreductase that uses light energy to abstract electrons from H(2)O, generating O(2) and a proton gradient subsequently used for ATP formation. It consists of a core antenna complex that captures photons, and an electron transfer chain that converts photonic excitation into a charge separation.</text>
</comment>
<comment type="cofactor">
    <cofactor evidence="1">
        <name>heme b</name>
        <dbReference type="ChEBI" id="CHEBI:60344"/>
    </cofactor>
    <text evidence="1">With its partner (PsbE) binds heme. PSII binds additional chlorophylls, carotenoids and specific lipids.</text>
</comment>
<comment type="subunit">
    <text evidence="1">Heterodimer of an alpha subunit and a beta subunit. PSII is composed of 1 copy each of membrane proteins PsbA, PsbB, PsbC, PsbD, PsbE, PsbF, PsbH, PsbI, PsbJ, PsbK, PsbL, PsbM, PsbT, PsbX, PsbY, PsbZ, Psb30/Ycf12, at least 3 peripheral proteins of the oxygen-evolving complex and a large number of cofactors. It forms dimeric complexes.</text>
</comment>
<comment type="subcellular location">
    <subcellularLocation>
        <location evidence="1">Plastid</location>
        <location evidence="1">Chloroplast thylakoid membrane</location>
        <topology evidence="1">Single-pass membrane protein</topology>
    </subcellularLocation>
</comment>
<comment type="similarity">
    <text evidence="1">Belongs to the PsbE/PsbF family.</text>
</comment>
<feature type="chain" id="PRO_0000200409" description="Cytochrome b559 subunit beta">
    <location>
        <begin position="1"/>
        <end position="39"/>
    </location>
</feature>
<feature type="transmembrane region" description="Helical" evidence="1">
    <location>
        <begin position="14"/>
        <end position="30"/>
    </location>
</feature>
<feature type="binding site" description="axial binding residue" evidence="1">
    <location>
        <position position="18"/>
    </location>
    <ligand>
        <name>heme</name>
        <dbReference type="ChEBI" id="CHEBI:30413"/>
        <note>ligand shared with alpha subunit</note>
    </ligand>
    <ligandPart>
        <name>Fe</name>
        <dbReference type="ChEBI" id="CHEBI:18248"/>
    </ligandPart>
</feature>
<name>PSBF_IPOSE</name>
<proteinExistence type="inferred from homology"/>
<evidence type="ECO:0000255" key="1">
    <source>
        <dbReference type="HAMAP-Rule" id="MF_00643"/>
    </source>
</evidence>
<organism>
    <name type="scientific">Ipomoea setosa</name>
    <name type="common">Brazilian morning glory</name>
    <dbReference type="NCBI Taxonomy" id="89662"/>
    <lineage>
        <taxon>Eukaryota</taxon>
        <taxon>Viridiplantae</taxon>
        <taxon>Streptophyta</taxon>
        <taxon>Embryophyta</taxon>
        <taxon>Tracheophyta</taxon>
        <taxon>Spermatophyta</taxon>
        <taxon>Magnoliopsida</taxon>
        <taxon>eudicotyledons</taxon>
        <taxon>Gunneridae</taxon>
        <taxon>Pentapetalae</taxon>
        <taxon>asterids</taxon>
        <taxon>lamiids</taxon>
        <taxon>Solanales</taxon>
        <taxon>Convolvulaceae</taxon>
        <taxon>Ipomoeeae</taxon>
        <taxon>Ipomoea</taxon>
    </lineage>
</organism>
<dbReference type="EMBL" id="AY100857">
    <property type="protein sequence ID" value="AAM55550.1"/>
    <property type="molecule type" value="Genomic_DNA"/>
</dbReference>
<dbReference type="SMR" id="Q7H8K7"/>
<dbReference type="GO" id="GO:0009535">
    <property type="term" value="C:chloroplast thylakoid membrane"/>
    <property type="evidence" value="ECO:0007669"/>
    <property type="project" value="UniProtKB-SubCell"/>
</dbReference>
<dbReference type="GO" id="GO:0009539">
    <property type="term" value="C:photosystem II reaction center"/>
    <property type="evidence" value="ECO:0007669"/>
    <property type="project" value="InterPro"/>
</dbReference>
<dbReference type="GO" id="GO:0009055">
    <property type="term" value="F:electron transfer activity"/>
    <property type="evidence" value="ECO:0007669"/>
    <property type="project" value="UniProtKB-UniRule"/>
</dbReference>
<dbReference type="GO" id="GO:0020037">
    <property type="term" value="F:heme binding"/>
    <property type="evidence" value="ECO:0007669"/>
    <property type="project" value="InterPro"/>
</dbReference>
<dbReference type="GO" id="GO:0005506">
    <property type="term" value="F:iron ion binding"/>
    <property type="evidence" value="ECO:0007669"/>
    <property type="project" value="UniProtKB-UniRule"/>
</dbReference>
<dbReference type="GO" id="GO:0009767">
    <property type="term" value="P:photosynthetic electron transport chain"/>
    <property type="evidence" value="ECO:0007669"/>
    <property type="project" value="InterPro"/>
</dbReference>
<dbReference type="HAMAP" id="MF_00643">
    <property type="entry name" value="PSII_PsbF"/>
    <property type="match status" value="1"/>
</dbReference>
<dbReference type="InterPro" id="IPR006241">
    <property type="entry name" value="PSII_cyt_b559_bsu"/>
</dbReference>
<dbReference type="InterPro" id="IPR006216">
    <property type="entry name" value="PSII_cyt_b559_CS"/>
</dbReference>
<dbReference type="InterPro" id="IPR013081">
    <property type="entry name" value="PSII_cyt_b559_N"/>
</dbReference>
<dbReference type="NCBIfam" id="TIGR01333">
    <property type="entry name" value="cyt_b559_beta"/>
    <property type="match status" value="1"/>
</dbReference>
<dbReference type="Pfam" id="PF00283">
    <property type="entry name" value="Cytochrom_B559"/>
    <property type="match status" value="1"/>
</dbReference>
<dbReference type="PIRSF" id="PIRSF000037">
    <property type="entry name" value="PsbF"/>
    <property type="match status" value="1"/>
</dbReference>
<dbReference type="SUPFAM" id="SSF161045">
    <property type="entry name" value="Cytochrome b559 subunits"/>
    <property type="match status" value="1"/>
</dbReference>
<dbReference type="PROSITE" id="PS00537">
    <property type="entry name" value="CYTOCHROME_B559"/>
    <property type="match status" value="1"/>
</dbReference>
<reference key="1">
    <citation type="journal article" date="2002" name="Am. J. Bot.">
        <title>Monophyly of the Convolvulaceae and circumscription of their major lineages based on DNA sequences of multiple chloroplast loci.</title>
        <authorList>
            <person name="Stefanovic S."/>
            <person name="Krueger L."/>
            <person name="Olmstead R.G."/>
        </authorList>
        <dbReference type="AGRICOLA" id="IND23320510"/>
    </citation>
    <scope>NUCLEOTIDE SEQUENCE [GENOMIC DNA]</scope>
</reference>
<accession>Q7H8K7</accession>
<sequence length="39" mass="4484">MTIDRTYPIFTVRWLAVHGLAVPTVFFLGSISAMQFIQR</sequence>
<protein>
    <recommendedName>
        <fullName evidence="1">Cytochrome b559 subunit beta</fullName>
    </recommendedName>
    <alternativeName>
        <fullName evidence="1">PSII reaction center subunit VI</fullName>
    </alternativeName>
</protein>
<gene>
    <name evidence="1" type="primary">psbF</name>
</gene>